<gene>
    <name type="ordered locus">At4g39580</name>
    <name type="ORF">F23K16.210</name>
</gene>
<organism>
    <name type="scientific">Arabidopsis thaliana</name>
    <name type="common">Mouse-ear cress</name>
    <dbReference type="NCBI Taxonomy" id="3702"/>
    <lineage>
        <taxon>Eukaryota</taxon>
        <taxon>Viridiplantae</taxon>
        <taxon>Streptophyta</taxon>
        <taxon>Embryophyta</taxon>
        <taxon>Tracheophyta</taxon>
        <taxon>Spermatophyta</taxon>
        <taxon>Magnoliopsida</taxon>
        <taxon>eudicotyledons</taxon>
        <taxon>Gunneridae</taxon>
        <taxon>Pentapetalae</taxon>
        <taxon>rosids</taxon>
        <taxon>malvids</taxon>
        <taxon>Brassicales</taxon>
        <taxon>Brassicaceae</taxon>
        <taxon>Camelineae</taxon>
        <taxon>Arabidopsis</taxon>
    </lineage>
</organism>
<reference key="1">
    <citation type="journal article" date="1999" name="Nature">
        <title>Sequence and analysis of chromosome 4 of the plant Arabidopsis thaliana.</title>
        <authorList>
            <person name="Mayer K.F.X."/>
            <person name="Schueller C."/>
            <person name="Wambutt R."/>
            <person name="Murphy G."/>
            <person name="Volckaert G."/>
            <person name="Pohl T."/>
            <person name="Duesterhoeft A."/>
            <person name="Stiekema W."/>
            <person name="Entian K.-D."/>
            <person name="Terryn N."/>
            <person name="Harris B."/>
            <person name="Ansorge W."/>
            <person name="Brandt P."/>
            <person name="Grivell L.A."/>
            <person name="Rieger M."/>
            <person name="Weichselgartner M."/>
            <person name="de Simone V."/>
            <person name="Obermaier B."/>
            <person name="Mache R."/>
            <person name="Mueller M."/>
            <person name="Kreis M."/>
            <person name="Delseny M."/>
            <person name="Puigdomenech P."/>
            <person name="Watson M."/>
            <person name="Schmidtheini T."/>
            <person name="Reichert B."/>
            <person name="Portetelle D."/>
            <person name="Perez-Alonso M."/>
            <person name="Boutry M."/>
            <person name="Bancroft I."/>
            <person name="Vos P."/>
            <person name="Hoheisel J."/>
            <person name="Zimmermann W."/>
            <person name="Wedler H."/>
            <person name="Ridley P."/>
            <person name="Langham S.-A."/>
            <person name="McCullagh B."/>
            <person name="Bilham L."/>
            <person name="Robben J."/>
            <person name="van der Schueren J."/>
            <person name="Grymonprez B."/>
            <person name="Chuang Y.-J."/>
            <person name="Vandenbussche F."/>
            <person name="Braeken M."/>
            <person name="Weltjens I."/>
            <person name="Voet M."/>
            <person name="Bastiaens I."/>
            <person name="Aert R."/>
            <person name="Defoor E."/>
            <person name="Weitzenegger T."/>
            <person name="Bothe G."/>
            <person name="Ramsperger U."/>
            <person name="Hilbert H."/>
            <person name="Braun M."/>
            <person name="Holzer E."/>
            <person name="Brandt A."/>
            <person name="Peters S."/>
            <person name="van Staveren M."/>
            <person name="Dirkse W."/>
            <person name="Mooijman P."/>
            <person name="Klein Lankhorst R."/>
            <person name="Rose M."/>
            <person name="Hauf J."/>
            <person name="Koetter P."/>
            <person name="Berneiser S."/>
            <person name="Hempel S."/>
            <person name="Feldpausch M."/>
            <person name="Lamberth S."/>
            <person name="Van den Daele H."/>
            <person name="De Keyser A."/>
            <person name="Buysshaert C."/>
            <person name="Gielen J."/>
            <person name="Villarroel R."/>
            <person name="De Clercq R."/>
            <person name="van Montagu M."/>
            <person name="Rogers J."/>
            <person name="Cronin A."/>
            <person name="Quail M.A."/>
            <person name="Bray-Allen S."/>
            <person name="Clark L."/>
            <person name="Doggett J."/>
            <person name="Hall S."/>
            <person name="Kay M."/>
            <person name="Lennard N."/>
            <person name="McLay K."/>
            <person name="Mayes R."/>
            <person name="Pettett A."/>
            <person name="Rajandream M.A."/>
            <person name="Lyne M."/>
            <person name="Benes V."/>
            <person name="Rechmann S."/>
            <person name="Borkova D."/>
            <person name="Bloecker H."/>
            <person name="Scharfe M."/>
            <person name="Grimm M."/>
            <person name="Loehnert T.-H."/>
            <person name="Dose S."/>
            <person name="de Haan M."/>
            <person name="Maarse A.C."/>
            <person name="Schaefer M."/>
            <person name="Mueller-Auer S."/>
            <person name="Gabel C."/>
            <person name="Fuchs M."/>
            <person name="Fartmann B."/>
            <person name="Granderath K."/>
            <person name="Dauner D."/>
            <person name="Herzl A."/>
            <person name="Neumann S."/>
            <person name="Argiriou A."/>
            <person name="Vitale D."/>
            <person name="Liguori R."/>
            <person name="Piravandi E."/>
            <person name="Massenet O."/>
            <person name="Quigley F."/>
            <person name="Clabauld G."/>
            <person name="Muendlein A."/>
            <person name="Felber R."/>
            <person name="Schnabl S."/>
            <person name="Hiller R."/>
            <person name="Schmidt W."/>
            <person name="Lecharny A."/>
            <person name="Aubourg S."/>
            <person name="Chefdor F."/>
            <person name="Cooke R."/>
            <person name="Berger C."/>
            <person name="Monfort A."/>
            <person name="Casacuberta E."/>
            <person name="Gibbons T."/>
            <person name="Weber N."/>
            <person name="Vandenbol M."/>
            <person name="Bargues M."/>
            <person name="Terol J."/>
            <person name="Torres A."/>
            <person name="Perez-Perez A."/>
            <person name="Purnelle B."/>
            <person name="Bent E."/>
            <person name="Johnson S."/>
            <person name="Tacon D."/>
            <person name="Jesse T."/>
            <person name="Heijnen L."/>
            <person name="Schwarz S."/>
            <person name="Scholler P."/>
            <person name="Heber S."/>
            <person name="Francs P."/>
            <person name="Bielke C."/>
            <person name="Frishman D."/>
            <person name="Haase D."/>
            <person name="Lemcke K."/>
            <person name="Mewes H.-W."/>
            <person name="Stocker S."/>
            <person name="Zaccaria P."/>
            <person name="Bevan M."/>
            <person name="Wilson R.K."/>
            <person name="de la Bastide M."/>
            <person name="Habermann K."/>
            <person name="Parnell L."/>
            <person name="Dedhia N."/>
            <person name="Gnoj L."/>
            <person name="Schutz K."/>
            <person name="Huang E."/>
            <person name="Spiegel L."/>
            <person name="Sekhon M."/>
            <person name="Murray J."/>
            <person name="Sheet P."/>
            <person name="Cordes M."/>
            <person name="Abu-Threideh J."/>
            <person name="Stoneking T."/>
            <person name="Kalicki J."/>
            <person name="Graves T."/>
            <person name="Harmon G."/>
            <person name="Edwards J."/>
            <person name="Latreille P."/>
            <person name="Courtney L."/>
            <person name="Cloud J."/>
            <person name="Abbott A."/>
            <person name="Scott K."/>
            <person name="Johnson D."/>
            <person name="Minx P."/>
            <person name="Bentley D."/>
            <person name="Fulton B."/>
            <person name="Miller N."/>
            <person name="Greco T."/>
            <person name="Kemp K."/>
            <person name="Kramer J."/>
            <person name="Fulton L."/>
            <person name="Mardis E."/>
            <person name="Dante M."/>
            <person name="Pepin K."/>
            <person name="Hillier L.W."/>
            <person name="Nelson J."/>
            <person name="Spieth J."/>
            <person name="Ryan E."/>
            <person name="Andrews S."/>
            <person name="Geisel C."/>
            <person name="Layman D."/>
            <person name="Du H."/>
            <person name="Ali J."/>
            <person name="Berghoff A."/>
            <person name="Jones K."/>
            <person name="Drone K."/>
            <person name="Cotton M."/>
            <person name="Joshu C."/>
            <person name="Antonoiu B."/>
            <person name="Zidanic M."/>
            <person name="Strong C."/>
            <person name="Sun H."/>
            <person name="Lamar B."/>
            <person name="Yordan C."/>
            <person name="Ma P."/>
            <person name="Zhong J."/>
            <person name="Preston R."/>
            <person name="Vil D."/>
            <person name="Shekher M."/>
            <person name="Matero A."/>
            <person name="Shah R."/>
            <person name="Swaby I.K."/>
            <person name="O'Shaughnessy A."/>
            <person name="Rodriguez M."/>
            <person name="Hoffman J."/>
            <person name="Till S."/>
            <person name="Granat S."/>
            <person name="Shohdy N."/>
            <person name="Hasegawa A."/>
            <person name="Hameed A."/>
            <person name="Lodhi M."/>
            <person name="Johnson A."/>
            <person name="Chen E."/>
            <person name="Marra M.A."/>
            <person name="Martienssen R."/>
            <person name="McCombie W.R."/>
        </authorList>
    </citation>
    <scope>NUCLEOTIDE SEQUENCE [LARGE SCALE GENOMIC DNA]</scope>
    <source>
        <strain>cv. Columbia</strain>
    </source>
</reference>
<reference key="2">
    <citation type="journal article" date="2017" name="Plant J.">
        <title>Araport11: a complete reannotation of the Arabidopsis thaliana reference genome.</title>
        <authorList>
            <person name="Cheng C.Y."/>
            <person name="Krishnakumar V."/>
            <person name="Chan A.P."/>
            <person name="Thibaud-Nissen F."/>
            <person name="Schobel S."/>
            <person name="Town C.D."/>
        </authorList>
    </citation>
    <scope>GENOME REANNOTATION</scope>
    <source>
        <strain>cv. Columbia</strain>
    </source>
</reference>
<sequence>MNEEEAPSEQKKTLSLVPSPTTNLFLPDDILLSSLSRISRLYYPTFSLVSKSFRSLIASPELYQTRSILGRTESCLYVSLRLLNDSNLRWYTLCRVPDRKLTNFSGGHLLVPILSRYAPPAHWSSVVAVDYNIYAIGGPINDAPSSSVSVLDCQCEKWREAPSMRVARNYPTATVLDGKIYVAGGCEDCTSLDCIEVFDPKTQTWDSVASPGTERCERLVYKSVGIEGKYHLFGGAGHVAYDPKEGRWDSVGMDMEMGRTWVSYCVINNILFYYNDREFKWYDYKGRFWRKLMGLERLIKFLCYSRVNLAAYGEKMAVLWDTFVPSSSKNKMIWCAEITIERHDIYEICGKTEWFDVVLRVPKSYELVHVLAATV</sequence>
<accession>Q9SVA0</accession>
<keyword id="KW-0880">Kelch repeat</keyword>
<keyword id="KW-1185">Reference proteome</keyword>
<keyword id="KW-0677">Repeat</keyword>
<dbReference type="EMBL" id="AL078620">
    <property type="protein sequence ID" value="CAB44693.1"/>
    <property type="molecule type" value="Genomic_DNA"/>
</dbReference>
<dbReference type="EMBL" id="AL161595">
    <property type="protein sequence ID" value="CAB80621.1"/>
    <property type="molecule type" value="Genomic_DNA"/>
</dbReference>
<dbReference type="EMBL" id="CP002687">
    <property type="protein sequence ID" value="AEE87090.1"/>
    <property type="molecule type" value="Genomic_DNA"/>
</dbReference>
<dbReference type="PIR" id="T09374">
    <property type="entry name" value="T09374"/>
</dbReference>
<dbReference type="RefSeq" id="NP_195668.1">
    <property type="nucleotide sequence ID" value="NM_120118.1"/>
</dbReference>
<dbReference type="SMR" id="Q9SVA0"/>
<dbReference type="STRING" id="3702.Q9SVA0"/>
<dbReference type="iPTMnet" id="Q9SVA0"/>
<dbReference type="PaxDb" id="3702-AT4G39580.1"/>
<dbReference type="ProteomicsDB" id="230101"/>
<dbReference type="EnsemblPlants" id="AT4G39580.1">
    <property type="protein sequence ID" value="AT4G39580.1"/>
    <property type="gene ID" value="AT4G39580"/>
</dbReference>
<dbReference type="GeneID" id="830112"/>
<dbReference type="Gramene" id="AT4G39580.1">
    <property type="protein sequence ID" value="AT4G39580.1"/>
    <property type="gene ID" value="AT4G39580"/>
</dbReference>
<dbReference type="KEGG" id="ath:AT4G39580"/>
<dbReference type="Araport" id="AT4G39580"/>
<dbReference type="TAIR" id="AT4G39580"/>
<dbReference type="eggNOG" id="KOG1072">
    <property type="taxonomic scope" value="Eukaryota"/>
</dbReference>
<dbReference type="HOGENOM" id="CLU_032521_1_2_1"/>
<dbReference type="InParanoid" id="Q9SVA0"/>
<dbReference type="OMA" id="SKNKMIW"/>
<dbReference type="OrthoDB" id="45365at2759"/>
<dbReference type="PhylomeDB" id="Q9SVA0"/>
<dbReference type="PRO" id="PR:Q9SVA0"/>
<dbReference type="Proteomes" id="UP000006548">
    <property type="component" value="Chromosome 4"/>
</dbReference>
<dbReference type="ExpressionAtlas" id="Q9SVA0">
    <property type="expression patterns" value="baseline and differential"/>
</dbReference>
<dbReference type="CDD" id="cd22152">
    <property type="entry name" value="F-box_AtAFR-like"/>
    <property type="match status" value="1"/>
</dbReference>
<dbReference type="Gene3D" id="2.120.10.80">
    <property type="entry name" value="Kelch-type beta propeller"/>
    <property type="match status" value="1"/>
</dbReference>
<dbReference type="InterPro" id="IPR050354">
    <property type="entry name" value="F-box/kelch-repeat_ARATH"/>
</dbReference>
<dbReference type="InterPro" id="IPR001810">
    <property type="entry name" value="F-box_dom"/>
</dbReference>
<dbReference type="InterPro" id="IPR015915">
    <property type="entry name" value="Kelch-typ_b-propeller"/>
</dbReference>
<dbReference type="InterPro" id="IPR006652">
    <property type="entry name" value="Kelch_1"/>
</dbReference>
<dbReference type="PANTHER" id="PTHR24414:SF174">
    <property type="entry name" value="BNAA06G40530D PROTEIN"/>
    <property type="match status" value="1"/>
</dbReference>
<dbReference type="PANTHER" id="PTHR24414">
    <property type="entry name" value="F-BOX/KELCH-REPEAT PROTEIN SKIP4"/>
    <property type="match status" value="1"/>
</dbReference>
<dbReference type="Pfam" id="PF00646">
    <property type="entry name" value="F-box"/>
    <property type="match status" value="1"/>
</dbReference>
<dbReference type="Pfam" id="PF25210">
    <property type="entry name" value="Kelch_FKB95"/>
    <property type="match status" value="1"/>
</dbReference>
<dbReference type="SMART" id="SM00256">
    <property type="entry name" value="FBOX"/>
    <property type="match status" value="1"/>
</dbReference>
<dbReference type="SMART" id="SM00612">
    <property type="entry name" value="Kelch"/>
    <property type="match status" value="2"/>
</dbReference>
<dbReference type="SUPFAM" id="SSF117281">
    <property type="entry name" value="Kelch motif"/>
    <property type="match status" value="1"/>
</dbReference>
<feature type="chain" id="PRO_0000283259" description="F-box/kelch-repeat protein At4g39580">
    <location>
        <begin position="1"/>
        <end position="375"/>
    </location>
</feature>
<feature type="domain" description="F-box">
    <location>
        <begin position="20"/>
        <end position="66"/>
    </location>
</feature>
<feature type="repeat" description="Kelch 1">
    <location>
        <begin position="132"/>
        <end position="178"/>
    </location>
</feature>
<feature type="repeat" description="Kelch 2">
    <location>
        <begin position="179"/>
        <end position="225"/>
    </location>
</feature>
<feature type="repeat" description="Kelch 3">
    <location>
        <begin position="229"/>
        <end position="269"/>
    </location>
</feature>
<name>FK101_ARATH</name>
<protein>
    <recommendedName>
        <fullName>F-box/kelch-repeat protein At4g39580</fullName>
    </recommendedName>
</protein>
<proteinExistence type="predicted"/>